<proteinExistence type="inferred from homology"/>
<protein>
    <recommendedName>
        <fullName evidence="1">Phosphoglucosamine mutase</fullName>
        <ecNumber evidence="1">5.4.2.10</ecNumber>
    </recommendedName>
</protein>
<organism>
    <name type="scientific">Streptococcus equi subsp. zooepidemicus (strain H70)</name>
    <dbReference type="NCBI Taxonomy" id="553483"/>
    <lineage>
        <taxon>Bacteria</taxon>
        <taxon>Bacillati</taxon>
        <taxon>Bacillota</taxon>
        <taxon>Bacilli</taxon>
        <taxon>Lactobacillales</taxon>
        <taxon>Streptococcaceae</taxon>
        <taxon>Streptococcus</taxon>
    </lineage>
</organism>
<accession>C0MDT1</accession>
<feature type="chain" id="PRO_1000215497" description="Phosphoglucosamine mutase">
    <location>
        <begin position="1"/>
        <end position="450"/>
    </location>
</feature>
<feature type="active site" description="Phosphoserine intermediate" evidence="1">
    <location>
        <position position="101"/>
    </location>
</feature>
<feature type="binding site" description="via phosphate group" evidence="1">
    <location>
        <position position="101"/>
    </location>
    <ligand>
        <name>Mg(2+)</name>
        <dbReference type="ChEBI" id="CHEBI:18420"/>
    </ligand>
</feature>
<feature type="binding site" evidence="1">
    <location>
        <position position="240"/>
    </location>
    <ligand>
        <name>Mg(2+)</name>
        <dbReference type="ChEBI" id="CHEBI:18420"/>
    </ligand>
</feature>
<feature type="binding site" evidence="1">
    <location>
        <position position="242"/>
    </location>
    <ligand>
        <name>Mg(2+)</name>
        <dbReference type="ChEBI" id="CHEBI:18420"/>
    </ligand>
</feature>
<feature type="binding site" evidence="1">
    <location>
        <position position="244"/>
    </location>
    <ligand>
        <name>Mg(2+)</name>
        <dbReference type="ChEBI" id="CHEBI:18420"/>
    </ligand>
</feature>
<feature type="modified residue" description="Phosphoserine" evidence="1">
    <location>
        <position position="101"/>
    </location>
</feature>
<reference key="1">
    <citation type="journal article" date="2009" name="PLoS Pathog.">
        <title>Genomic evidence for the evolution of Streptococcus equi: host restriction, increased virulence, and genetic exchange with human pathogens.</title>
        <authorList>
            <person name="Holden M.T.G."/>
            <person name="Heather Z."/>
            <person name="Paillot R."/>
            <person name="Steward K.F."/>
            <person name="Webb K."/>
            <person name="Ainslie F."/>
            <person name="Jourdan T."/>
            <person name="Bason N.C."/>
            <person name="Holroyd N.E."/>
            <person name="Mungall K."/>
            <person name="Quail M.A."/>
            <person name="Sanders M."/>
            <person name="Simmonds M."/>
            <person name="Willey D."/>
            <person name="Brooks K."/>
            <person name="Aanensen D.M."/>
            <person name="Spratt B.G."/>
            <person name="Jolley K.A."/>
            <person name="Maiden M.C.J."/>
            <person name="Kehoe M."/>
            <person name="Chanter N."/>
            <person name="Bentley S.D."/>
            <person name="Robinson C."/>
            <person name="Maskell D.J."/>
            <person name="Parkhill J."/>
            <person name="Waller A.S."/>
        </authorList>
    </citation>
    <scope>NUCLEOTIDE SEQUENCE [LARGE SCALE GENOMIC DNA]</scope>
    <source>
        <strain>H70</strain>
    </source>
</reference>
<comment type="function">
    <text evidence="1">Catalyzes the conversion of glucosamine-6-phosphate to glucosamine-1-phosphate.</text>
</comment>
<comment type="catalytic activity">
    <reaction evidence="1">
        <text>alpha-D-glucosamine 1-phosphate = D-glucosamine 6-phosphate</text>
        <dbReference type="Rhea" id="RHEA:23424"/>
        <dbReference type="ChEBI" id="CHEBI:58516"/>
        <dbReference type="ChEBI" id="CHEBI:58725"/>
        <dbReference type="EC" id="5.4.2.10"/>
    </reaction>
</comment>
<comment type="cofactor">
    <cofactor evidence="1">
        <name>Mg(2+)</name>
        <dbReference type="ChEBI" id="CHEBI:18420"/>
    </cofactor>
    <text evidence="1">Binds 1 Mg(2+) ion per subunit.</text>
</comment>
<comment type="PTM">
    <text evidence="1">Activated by phosphorylation.</text>
</comment>
<comment type="similarity">
    <text evidence="1">Belongs to the phosphohexose mutase family.</text>
</comment>
<name>GLMM_STRS7</name>
<gene>
    <name evidence="1" type="primary">glmM</name>
    <name type="ordered locus">SZO_07490</name>
</gene>
<sequence>MGKYFGTDGVRGEANVELTPELAFKLGRFGGYVLSQHETERPRVFVARDTRISGEMLEAALIAGLLSVGIEVYKLGVLATPGVSYLVRTEKASAGVMISASHNPALDNGIKFFGSDGFKLADEQELEIEALLDAKKDLLPRPSAEGLGALVDYPEGLRKYERFLVTTGADLDGLKIALDTANGAASVSARNVFLDLNADITVIGENPNGLNINDGIGSTHPEKLQELMTETASDIGLAFDGDSDRLIAVDENGAIVDGDKIMFIIGKYLSEKGLLAKNTIVTTVMSNLGFHKALDSCGIHKKVTAVGDRYVVEEMRQFGYNLGGEQSGHVIIMDYNTTGDGQLTAVQLTKIMKETGKTLSELASEVTIYPQKLVNIRVDNSMKERAMEVPAIAEVIAQMEGEMAGNGRILVRPSGTEPLLRVMAEAPSNEEVDYYVDTIAAVVRAEIGLD</sequence>
<evidence type="ECO:0000255" key="1">
    <source>
        <dbReference type="HAMAP-Rule" id="MF_01554"/>
    </source>
</evidence>
<keyword id="KW-0413">Isomerase</keyword>
<keyword id="KW-0460">Magnesium</keyword>
<keyword id="KW-0479">Metal-binding</keyword>
<keyword id="KW-0597">Phosphoprotein</keyword>
<dbReference type="EC" id="5.4.2.10" evidence="1"/>
<dbReference type="EMBL" id="FM204884">
    <property type="protein sequence ID" value="CAW98886.1"/>
    <property type="molecule type" value="Genomic_DNA"/>
</dbReference>
<dbReference type="SMR" id="C0MDT1"/>
<dbReference type="KEGG" id="seq:SZO_07490"/>
<dbReference type="eggNOG" id="COG1109">
    <property type="taxonomic scope" value="Bacteria"/>
</dbReference>
<dbReference type="HOGENOM" id="CLU_016950_7_0_9"/>
<dbReference type="Proteomes" id="UP000001368">
    <property type="component" value="Chromosome"/>
</dbReference>
<dbReference type="GO" id="GO:0005829">
    <property type="term" value="C:cytosol"/>
    <property type="evidence" value="ECO:0007669"/>
    <property type="project" value="TreeGrafter"/>
</dbReference>
<dbReference type="GO" id="GO:0000287">
    <property type="term" value="F:magnesium ion binding"/>
    <property type="evidence" value="ECO:0007669"/>
    <property type="project" value="UniProtKB-UniRule"/>
</dbReference>
<dbReference type="GO" id="GO:0008966">
    <property type="term" value="F:phosphoglucosamine mutase activity"/>
    <property type="evidence" value="ECO:0007669"/>
    <property type="project" value="UniProtKB-UniRule"/>
</dbReference>
<dbReference type="GO" id="GO:0004615">
    <property type="term" value="F:phosphomannomutase activity"/>
    <property type="evidence" value="ECO:0007669"/>
    <property type="project" value="TreeGrafter"/>
</dbReference>
<dbReference type="GO" id="GO:0005975">
    <property type="term" value="P:carbohydrate metabolic process"/>
    <property type="evidence" value="ECO:0007669"/>
    <property type="project" value="InterPro"/>
</dbReference>
<dbReference type="GO" id="GO:0009252">
    <property type="term" value="P:peptidoglycan biosynthetic process"/>
    <property type="evidence" value="ECO:0007669"/>
    <property type="project" value="TreeGrafter"/>
</dbReference>
<dbReference type="GO" id="GO:0006048">
    <property type="term" value="P:UDP-N-acetylglucosamine biosynthetic process"/>
    <property type="evidence" value="ECO:0007669"/>
    <property type="project" value="TreeGrafter"/>
</dbReference>
<dbReference type="CDD" id="cd05802">
    <property type="entry name" value="GlmM"/>
    <property type="match status" value="1"/>
</dbReference>
<dbReference type="FunFam" id="3.30.310.50:FF:000001">
    <property type="entry name" value="Phosphoglucosamine mutase"/>
    <property type="match status" value="1"/>
</dbReference>
<dbReference type="FunFam" id="3.40.120.10:FF:000001">
    <property type="entry name" value="Phosphoglucosamine mutase"/>
    <property type="match status" value="1"/>
</dbReference>
<dbReference type="FunFam" id="3.40.120.10:FF:000002">
    <property type="entry name" value="Phosphoglucosamine mutase"/>
    <property type="match status" value="1"/>
</dbReference>
<dbReference type="Gene3D" id="3.40.120.10">
    <property type="entry name" value="Alpha-D-Glucose-1,6-Bisphosphate, subunit A, domain 3"/>
    <property type="match status" value="3"/>
</dbReference>
<dbReference type="Gene3D" id="3.30.310.50">
    <property type="entry name" value="Alpha-D-phosphohexomutase, C-terminal domain"/>
    <property type="match status" value="1"/>
</dbReference>
<dbReference type="HAMAP" id="MF_01554_B">
    <property type="entry name" value="GlmM_B"/>
    <property type="match status" value="1"/>
</dbReference>
<dbReference type="InterPro" id="IPR005844">
    <property type="entry name" value="A-D-PHexomutase_a/b/a-I"/>
</dbReference>
<dbReference type="InterPro" id="IPR016055">
    <property type="entry name" value="A-D-PHexomutase_a/b/a-I/II/III"/>
</dbReference>
<dbReference type="InterPro" id="IPR005845">
    <property type="entry name" value="A-D-PHexomutase_a/b/a-II"/>
</dbReference>
<dbReference type="InterPro" id="IPR005846">
    <property type="entry name" value="A-D-PHexomutase_a/b/a-III"/>
</dbReference>
<dbReference type="InterPro" id="IPR005843">
    <property type="entry name" value="A-D-PHexomutase_C"/>
</dbReference>
<dbReference type="InterPro" id="IPR036900">
    <property type="entry name" value="A-D-PHexomutase_C_sf"/>
</dbReference>
<dbReference type="InterPro" id="IPR016066">
    <property type="entry name" value="A-D-PHexomutase_CS"/>
</dbReference>
<dbReference type="InterPro" id="IPR005841">
    <property type="entry name" value="Alpha-D-phosphohexomutase_SF"/>
</dbReference>
<dbReference type="InterPro" id="IPR006352">
    <property type="entry name" value="GlmM_bact"/>
</dbReference>
<dbReference type="InterPro" id="IPR050060">
    <property type="entry name" value="Phosphoglucosamine_mutase"/>
</dbReference>
<dbReference type="NCBIfam" id="TIGR01455">
    <property type="entry name" value="glmM"/>
    <property type="match status" value="1"/>
</dbReference>
<dbReference type="PANTHER" id="PTHR42946:SF1">
    <property type="entry name" value="PHOSPHOGLUCOMUTASE (ALPHA-D-GLUCOSE-1,6-BISPHOSPHATE-DEPENDENT)"/>
    <property type="match status" value="1"/>
</dbReference>
<dbReference type="PANTHER" id="PTHR42946">
    <property type="entry name" value="PHOSPHOHEXOSE MUTASE"/>
    <property type="match status" value="1"/>
</dbReference>
<dbReference type="Pfam" id="PF02878">
    <property type="entry name" value="PGM_PMM_I"/>
    <property type="match status" value="1"/>
</dbReference>
<dbReference type="Pfam" id="PF02879">
    <property type="entry name" value="PGM_PMM_II"/>
    <property type="match status" value="1"/>
</dbReference>
<dbReference type="Pfam" id="PF02880">
    <property type="entry name" value="PGM_PMM_III"/>
    <property type="match status" value="1"/>
</dbReference>
<dbReference type="Pfam" id="PF00408">
    <property type="entry name" value="PGM_PMM_IV"/>
    <property type="match status" value="1"/>
</dbReference>
<dbReference type="PRINTS" id="PR00509">
    <property type="entry name" value="PGMPMM"/>
</dbReference>
<dbReference type="SUPFAM" id="SSF55957">
    <property type="entry name" value="Phosphoglucomutase, C-terminal domain"/>
    <property type="match status" value="1"/>
</dbReference>
<dbReference type="SUPFAM" id="SSF53738">
    <property type="entry name" value="Phosphoglucomutase, first 3 domains"/>
    <property type="match status" value="3"/>
</dbReference>
<dbReference type="PROSITE" id="PS00710">
    <property type="entry name" value="PGM_PMM"/>
    <property type="match status" value="1"/>
</dbReference>